<keyword id="KW-0050">Antiport</keyword>
<keyword id="KW-0406">Ion transport</keyword>
<keyword id="KW-0472">Membrane</keyword>
<keyword id="KW-0915">Sodium</keyword>
<keyword id="KW-0739">Sodium transport</keyword>
<keyword id="KW-0812">Transmembrane</keyword>
<keyword id="KW-1133">Transmembrane helix</keyword>
<keyword id="KW-0813">Transport</keyword>
<name>GERT_BACCE</name>
<gene>
    <name type="primary">gerT</name>
</gene>
<reference key="1">
    <citation type="journal article" date="2008" name="J. Bacteriol.">
        <title>The Bacillus cereus GerN and GerT protein homologs have distinct roles in spore germination and outgrowth, respectively.</title>
        <authorList>
            <person name="Senior A."/>
            <person name="Moir A."/>
        </authorList>
    </citation>
    <scope>NUCLEOTIDE SEQUENCE [GENOMIC DNA]</scope>
    <scope>FUNCTION</scope>
    <scope>GENE NAME</scope>
    <source>
        <strain>ATCC 10876 / DSM 9378 / NRRL B-569</strain>
    </source>
</reference>
<dbReference type="EMBL" id="EU789572">
    <property type="protein sequence ID" value="ACF08934.1"/>
    <property type="molecule type" value="Genomic_DNA"/>
</dbReference>
<dbReference type="RefSeq" id="WP_001985966.1">
    <property type="nucleotide sequence ID" value="NZ_VKPB01000022.1"/>
</dbReference>
<dbReference type="SMR" id="B3VQ24"/>
<dbReference type="eggNOG" id="COG0475">
    <property type="taxonomic scope" value="Bacteria"/>
</dbReference>
<dbReference type="GO" id="GO:0016020">
    <property type="term" value="C:membrane"/>
    <property type="evidence" value="ECO:0007669"/>
    <property type="project" value="UniProtKB-SubCell"/>
</dbReference>
<dbReference type="GO" id="GO:0015297">
    <property type="term" value="F:antiporter activity"/>
    <property type="evidence" value="ECO:0007669"/>
    <property type="project" value="UniProtKB-KW"/>
</dbReference>
<dbReference type="GO" id="GO:0008324">
    <property type="term" value="F:monoatomic cation transmembrane transporter activity"/>
    <property type="evidence" value="ECO:0007669"/>
    <property type="project" value="InterPro"/>
</dbReference>
<dbReference type="GO" id="GO:1902600">
    <property type="term" value="P:proton transmembrane transport"/>
    <property type="evidence" value="ECO:0007669"/>
    <property type="project" value="InterPro"/>
</dbReference>
<dbReference type="GO" id="GO:0006814">
    <property type="term" value="P:sodium ion transport"/>
    <property type="evidence" value="ECO:0007669"/>
    <property type="project" value="UniProtKB-KW"/>
</dbReference>
<dbReference type="Gene3D" id="1.20.1530.20">
    <property type="match status" value="1"/>
</dbReference>
<dbReference type="InterPro" id="IPR006153">
    <property type="entry name" value="Cation/H_exchanger_TM"/>
</dbReference>
<dbReference type="InterPro" id="IPR004771">
    <property type="entry name" value="K/H_exchanger"/>
</dbReference>
<dbReference type="InterPro" id="IPR038770">
    <property type="entry name" value="Na+/solute_symporter_sf"/>
</dbReference>
<dbReference type="NCBIfam" id="TIGR00932">
    <property type="entry name" value="2a37"/>
    <property type="match status" value="1"/>
</dbReference>
<dbReference type="PANTHER" id="PTHR43562">
    <property type="entry name" value="NAPA-TYPE SODIUM/HYDROGEN ANTIPORTER"/>
    <property type="match status" value="1"/>
</dbReference>
<dbReference type="PANTHER" id="PTHR43562:SF3">
    <property type="entry name" value="SODIUM ION_PROTON EXCHANGER (EUROFUNG)"/>
    <property type="match status" value="1"/>
</dbReference>
<dbReference type="Pfam" id="PF00999">
    <property type="entry name" value="Na_H_Exchanger"/>
    <property type="match status" value="1"/>
</dbReference>
<accession>B3VQ24</accession>
<comment type="function">
    <text evidence="2">Contributes to the success of spore outgrowth from the germinated state during alkaline or Na(+) stress. Does not have a significant role in germination.</text>
</comment>
<comment type="subcellular location">
    <subcellularLocation>
        <location evidence="3">Membrane</location>
        <topology evidence="3">Multi-pass membrane protein</topology>
    </subcellularLocation>
</comment>
<comment type="similarity">
    <text evidence="3">Belongs to the monovalent cation:proton antiporter 2 (CPA2) transporter (TC 2.A.37) family.</text>
</comment>
<evidence type="ECO:0000255" key="1"/>
<evidence type="ECO:0000269" key="2">
    <source>
    </source>
</evidence>
<evidence type="ECO:0000305" key="3"/>
<organism>
    <name type="scientific">Bacillus cereus</name>
    <dbReference type="NCBI Taxonomy" id="1396"/>
    <lineage>
        <taxon>Bacteria</taxon>
        <taxon>Bacillati</taxon>
        <taxon>Bacillota</taxon>
        <taxon>Bacilli</taxon>
        <taxon>Bacillales</taxon>
        <taxon>Bacillaceae</taxon>
        <taxon>Bacillus</taxon>
        <taxon>Bacillus cereus group</taxon>
    </lineage>
</organism>
<proteinExistence type="inferred from homology"/>
<sequence>MLFYFELVVILLCTKLAGDISVRLGQPSVLGKLIVGIIIGPAVLGIINSSELIDELSEIGVLLLMFMAGLETDLEELNRNLKSSFAVAAGGIIFPFIGGYVTGLLFGLIQSHAIFLGLLLCATSVSITVQTLRDLGKMNTRESTTILGAAVFDDVIVVILLAFVMSFLGTQDVNITLVIVKKIIFFVSIVFIAWKVVPWIMKMLVPLRVTEALISAALIICFSFSYYSEMMGIAGIIGAFAAGIAISQTEYKHEVEHKIEPIAYAIFVPVFFVSIGMEITFQGIGSQLWFIIIMTLIAIFTKLIGSGLGARLTGFNLQSSISIGAGMVSRGEVALIIAANGLTANLLAKENFTAIVIVVILTTIITPPLLKKYFV</sequence>
<protein>
    <recommendedName>
        <fullName>Probable Na(+)/H(+) antiporter GerT</fullName>
    </recommendedName>
</protein>
<feature type="chain" id="PRO_0000425691" description="Probable Na(+)/H(+) antiporter GerT">
    <location>
        <begin position="1"/>
        <end position="375"/>
    </location>
</feature>
<feature type="transmembrane region" description="Helical" evidence="1">
    <location>
        <begin position="27"/>
        <end position="47"/>
    </location>
</feature>
<feature type="transmembrane region" description="Helical" evidence="1">
    <location>
        <begin position="89"/>
        <end position="109"/>
    </location>
</feature>
<feature type="transmembrane region" description="Helical" evidence="1">
    <location>
        <begin position="112"/>
        <end position="132"/>
    </location>
</feature>
<feature type="transmembrane region" description="Helical" evidence="1">
    <location>
        <begin position="145"/>
        <end position="165"/>
    </location>
</feature>
<feature type="transmembrane region" description="Helical" evidence="1">
    <location>
        <begin position="183"/>
        <end position="203"/>
    </location>
</feature>
<feature type="transmembrane region" description="Helical" evidence="1">
    <location>
        <begin position="204"/>
        <end position="224"/>
    </location>
</feature>
<feature type="transmembrane region" description="Helical" evidence="1">
    <location>
        <begin position="226"/>
        <end position="246"/>
    </location>
</feature>
<feature type="transmembrane region" description="Helical" evidence="1">
    <location>
        <begin position="261"/>
        <end position="281"/>
    </location>
</feature>
<feature type="transmembrane region" description="Helical" evidence="1">
    <location>
        <begin position="288"/>
        <end position="308"/>
    </location>
</feature>
<feature type="transmembrane region" description="Helical" evidence="1">
    <location>
        <begin position="350"/>
        <end position="370"/>
    </location>
</feature>